<evidence type="ECO:0000250" key="1"/>
<evidence type="ECO:0000255" key="2">
    <source>
        <dbReference type="PROSITE-ProRule" id="PRU00159"/>
    </source>
</evidence>
<evidence type="ECO:0000255" key="3">
    <source>
        <dbReference type="PROSITE-ProRule" id="PRU00212"/>
    </source>
</evidence>
<evidence type="ECO:0000255" key="4">
    <source>
        <dbReference type="PROSITE-ProRule" id="PRU00565"/>
    </source>
</evidence>
<evidence type="ECO:0000255" key="5">
    <source>
        <dbReference type="PROSITE-ProRule" id="PRU10027"/>
    </source>
</evidence>
<evidence type="ECO:0000305" key="6"/>
<gene>
    <name type="primary">RKIN1</name>
</gene>
<organism>
    <name type="scientific">Secale cereale</name>
    <name type="common">Rye</name>
    <dbReference type="NCBI Taxonomy" id="4550"/>
    <lineage>
        <taxon>Eukaryota</taxon>
        <taxon>Viridiplantae</taxon>
        <taxon>Streptophyta</taxon>
        <taxon>Embryophyta</taxon>
        <taxon>Tracheophyta</taxon>
        <taxon>Spermatophyta</taxon>
        <taxon>Magnoliopsida</taxon>
        <taxon>Liliopsida</taxon>
        <taxon>Poales</taxon>
        <taxon>Poaceae</taxon>
        <taxon>BOP clade</taxon>
        <taxon>Pooideae</taxon>
        <taxon>Triticodae</taxon>
        <taxon>Triticeae</taxon>
        <taxon>Hordeinae</taxon>
        <taxon>Secale</taxon>
    </lineage>
</organism>
<keyword id="KW-0067">ATP-binding</keyword>
<keyword id="KW-0119">Carbohydrate metabolism</keyword>
<keyword id="KW-0418">Kinase</keyword>
<keyword id="KW-0547">Nucleotide-binding</keyword>
<keyword id="KW-0597">Phosphoprotein</keyword>
<keyword id="KW-0723">Serine/threonine-protein kinase</keyword>
<keyword id="KW-0808">Transferase</keyword>
<name>RKIN1_SECCE</name>
<protein>
    <recommendedName>
        <fullName>Carbon catabolite-derepressing protein kinase</fullName>
        <ecNumber>2.7.11.1</ecNumber>
    </recommendedName>
</protein>
<feature type="chain" id="PRO_0000086614" description="Carbon catabolite-derepressing protein kinase">
    <location>
        <begin position="1"/>
        <end position="502"/>
    </location>
</feature>
<feature type="domain" description="Protein kinase" evidence="2">
    <location>
        <begin position="14"/>
        <end position="269"/>
    </location>
</feature>
<feature type="domain" description="UBA" evidence="3">
    <location>
        <begin position="290"/>
        <end position="330"/>
    </location>
</feature>
<feature type="domain" description="KA1" evidence="4">
    <location>
        <begin position="453"/>
        <end position="501"/>
    </location>
</feature>
<feature type="active site" description="Proton acceptor" evidence="2 5">
    <location>
        <position position="140"/>
    </location>
</feature>
<feature type="binding site" evidence="2">
    <location>
        <begin position="20"/>
        <end position="28"/>
    </location>
    <ligand>
        <name>ATP</name>
        <dbReference type="ChEBI" id="CHEBI:30616"/>
    </ligand>
</feature>
<feature type="binding site" evidence="2">
    <location>
        <position position="43"/>
    </location>
    <ligand>
        <name>ATP</name>
        <dbReference type="ChEBI" id="CHEBI:30616"/>
    </ligand>
</feature>
<feature type="modified residue" description="Phosphothreonine; by autocatalysis" evidence="1">
    <location>
        <position position="173"/>
    </location>
</feature>
<dbReference type="EC" id="2.7.11.1"/>
<dbReference type="EMBL" id="M74113">
    <property type="protein sequence ID" value="AAA33921.1"/>
    <property type="molecule type" value="mRNA"/>
</dbReference>
<dbReference type="PIR" id="A41361">
    <property type="entry name" value="A41361"/>
</dbReference>
<dbReference type="SMR" id="Q02723"/>
<dbReference type="BRENDA" id="2.7.11.1">
    <property type="organism ID" value="5654"/>
</dbReference>
<dbReference type="GO" id="GO:0005737">
    <property type="term" value="C:cytoplasm"/>
    <property type="evidence" value="ECO:0007669"/>
    <property type="project" value="TreeGrafter"/>
</dbReference>
<dbReference type="GO" id="GO:0005524">
    <property type="term" value="F:ATP binding"/>
    <property type="evidence" value="ECO:0007669"/>
    <property type="project" value="UniProtKB-KW"/>
</dbReference>
<dbReference type="GO" id="GO:0106310">
    <property type="term" value="F:protein serine kinase activity"/>
    <property type="evidence" value="ECO:0007669"/>
    <property type="project" value="RHEA"/>
</dbReference>
<dbReference type="GO" id="GO:0004674">
    <property type="term" value="F:protein serine/threonine kinase activity"/>
    <property type="evidence" value="ECO:0007669"/>
    <property type="project" value="UniProtKB-KW"/>
</dbReference>
<dbReference type="GO" id="GO:0035556">
    <property type="term" value="P:intracellular signal transduction"/>
    <property type="evidence" value="ECO:0007669"/>
    <property type="project" value="TreeGrafter"/>
</dbReference>
<dbReference type="CDD" id="cd12122">
    <property type="entry name" value="AMPKA_C"/>
    <property type="match status" value="1"/>
</dbReference>
<dbReference type="CDD" id="cd14079">
    <property type="entry name" value="STKc_AMPK_alpha"/>
    <property type="match status" value="1"/>
</dbReference>
<dbReference type="CDD" id="cd14335">
    <property type="entry name" value="UBA_SnRK1_plant"/>
    <property type="match status" value="1"/>
</dbReference>
<dbReference type="FunFam" id="3.30.200.20:FF:000042">
    <property type="entry name" value="Aurora kinase A"/>
    <property type="match status" value="1"/>
</dbReference>
<dbReference type="FunFam" id="1.10.510.10:FF:000407">
    <property type="entry name" value="Non-specific serine/threonine protein kinase"/>
    <property type="match status" value="1"/>
</dbReference>
<dbReference type="FunFam" id="3.30.310.80:FF:000006">
    <property type="entry name" value="Non-specific serine/threonine protein kinase"/>
    <property type="match status" value="1"/>
</dbReference>
<dbReference type="Gene3D" id="3.30.310.80">
    <property type="entry name" value="Kinase associated domain 1, KA1"/>
    <property type="match status" value="1"/>
</dbReference>
<dbReference type="Gene3D" id="1.10.510.10">
    <property type="entry name" value="Transferase(Phosphotransferase) domain 1"/>
    <property type="match status" value="1"/>
</dbReference>
<dbReference type="InterPro" id="IPR028375">
    <property type="entry name" value="KA1/Ssp2_C"/>
</dbReference>
<dbReference type="InterPro" id="IPR001772">
    <property type="entry name" value="KA1_dom"/>
</dbReference>
<dbReference type="InterPro" id="IPR011009">
    <property type="entry name" value="Kinase-like_dom_sf"/>
</dbReference>
<dbReference type="InterPro" id="IPR000719">
    <property type="entry name" value="Prot_kinase_dom"/>
</dbReference>
<dbReference type="InterPro" id="IPR017441">
    <property type="entry name" value="Protein_kinase_ATP_BS"/>
</dbReference>
<dbReference type="InterPro" id="IPR008271">
    <property type="entry name" value="Ser/Thr_kinase_AS"/>
</dbReference>
<dbReference type="InterPro" id="IPR015940">
    <property type="entry name" value="UBA"/>
</dbReference>
<dbReference type="PANTHER" id="PTHR24346">
    <property type="entry name" value="MAP/MICROTUBULE AFFINITY-REGULATING KINASE"/>
    <property type="match status" value="1"/>
</dbReference>
<dbReference type="PANTHER" id="PTHR24346:SF103">
    <property type="entry name" value="NON-SPECIFIC SERINE_THREONINE PROTEIN KINASE"/>
    <property type="match status" value="1"/>
</dbReference>
<dbReference type="Pfam" id="PF02149">
    <property type="entry name" value="KA1"/>
    <property type="match status" value="1"/>
</dbReference>
<dbReference type="Pfam" id="PF00069">
    <property type="entry name" value="Pkinase"/>
    <property type="match status" value="1"/>
</dbReference>
<dbReference type="Pfam" id="PF00627">
    <property type="entry name" value="UBA"/>
    <property type="match status" value="1"/>
</dbReference>
<dbReference type="SMART" id="SM00220">
    <property type="entry name" value="S_TKc"/>
    <property type="match status" value="1"/>
</dbReference>
<dbReference type="SUPFAM" id="SSF103243">
    <property type="entry name" value="KA1-like"/>
    <property type="match status" value="1"/>
</dbReference>
<dbReference type="SUPFAM" id="SSF56112">
    <property type="entry name" value="Protein kinase-like (PK-like)"/>
    <property type="match status" value="1"/>
</dbReference>
<dbReference type="PROSITE" id="PS50032">
    <property type="entry name" value="KA1"/>
    <property type="match status" value="1"/>
</dbReference>
<dbReference type="PROSITE" id="PS00107">
    <property type="entry name" value="PROTEIN_KINASE_ATP"/>
    <property type="match status" value="1"/>
</dbReference>
<dbReference type="PROSITE" id="PS50011">
    <property type="entry name" value="PROTEIN_KINASE_DOM"/>
    <property type="match status" value="1"/>
</dbReference>
<dbReference type="PROSITE" id="PS00108">
    <property type="entry name" value="PROTEIN_KINASE_ST"/>
    <property type="match status" value="1"/>
</dbReference>
<dbReference type="PROSITE" id="PS50030">
    <property type="entry name" value="UBA"/>
    <property type="match status" value="1"/>
</dbReference>
<sequence length="502" mass="57711">MDGGGEHSEALKNYYLGKILGVGTFAKVIIAEHKHTRHKVAIKVLNRRQMRAPEMEEKAKREIKILRLFIDLIHPHIIRVYEVIVTPKDIFVVMEYCQNGDLLDYILEKRRLQEDEARRTFQQIISAVEYCHRNKVVHRDLKPENLLLDSKYNVKLADFGLSNVMHDGHFLKTSCGSLNYAAPEVISGKLYAGPEIDVWSCGVILYALLCGAVPFDDDNIPNLFKKIKGGTYILPIYLSDLVRDLISRMLIVDPMKRITIGEIRKHSWFQNRLPRYLAVPPPDMMQQAKMIDEDTLRDVVKLGYDKDHVCESLCNRLQNEETVAYYLLLDNRFRATSGYLGAHYQQPMESASPSTRSYLPGSNDSQGSGLRPYYRVERKWALGLQQSRAPPRAIMIEVLKALKELNVCWKKNGDCYNMKCRWCPGFPRVSDMLLDANHSFVDDCAIKDNGDANSRLPAVIKFEIQLYKTKDDKYLLDMQRVTGPQLLFLEFCAAFLTNLRVL</sequence>
<comment type="function">
    <text>Essential for release from glucose repression.</text>
</comment>
<comment type="catalytic activity">
    <reaction>
        <text>L-seryl-[protein] + ATP = O-phospho-L-seryl-[protein] + ADP + H(+)</text>
        <dbReference type="Rhea" id="RHEA:17989"/>
        <dbReference type="Rhea" id="RHEA-COMP:9863"/>
        <dbReference type="Rhea" id="RHEA-COMP:11604"/>
        <dbReference type="ChEBI" id="CHEBI:15378"/>
        <dbReference type="ChEBI" id="CHEBI:29999"/>
        <dbReference type="ChEBI" id="CHEBI:30616"/>
        <dbReference type="ChEBI" id="CHEBI:83421"/>
        <dbReference type="ChEBI" id="CHEBI:456216"/>
        <dbReference type="EC" id="2.7.11.1"/>
    </reaction>
</comment>
<comment type="catalytic activity">
    <reaction>
        <text>L-threonyl-[protein] + ATP = O-phospho-L-threonyl-[protein] + ADP + H(+)</text>
        <dbReference type="Rhea" id="RHEA:46608"/>
        <dbReference type="Rhea" id="RHEA-COMP:11060"/>
        <dbReference type="Rhea" id="RHEA-COMP:11605"/>
        <dbReference type="ChEBI" id="CHEBI:15378"/>
        <dbReference type="ChEBI" id="CHEBI:30013"/>
        <dbReference type="ChEBI" id="CHEBI:30616"/>
        <dbReference type="ChEBI" id="CHEBI:61977"/>
        <dbReference type="ChEBI" id="CHEBI:456216"/>
        <dbReference type="EC" id="2.7.11.1"/>
    </reaction>
</comment>
<comment type="similarity">
    <text evidence="6">Belongs to the protein kinase superfamily. CAMK Ser/Thr protein kinase family. SNF1 subfamily.</text>
</comment>
<proteinExistence type="evidence at transcript level"/>
<reference key="1">
    <citation type="journal article" date="1991" name="Proc. Natl. Acad. Sci. U.S.A.">
        <title>Complementation of snf1, a mutation affecting global regulation of carbon metabolism in yeast, by a plant protein kinase cDNA.</title>
        <authorList>
            <person name="Alderson A."/>
            <person name="Sabelli P.A."/>
            <person name="Dickinson J.R."/>
            <person name="Cole D."/>
            <person name="Richardson M."/>
            <person name="Kreis M."/>
            <person name="Shewry P.R."/>
            <person name="Halford N.G."/>
        </authorList>
    </citation>
    <scope>NUCLEOTIDE SEQUENCE [MRNA]</scope>
    <source>
        <tissue>Endosperm</tissue>
    </source>
</reference>
<accession>Q02723</accession>